<accession>A4IGV6</accession>
<feature type="chain" id="PRO_0000316780" description="Macrophage immunometabolism regulator">
    <location>
        <begin position="1"/>
        <end position="205"/>
    </location>
</feature>
<feature type="region of interest" description="Disordered" evidence="3">
    <location>
        <begin position="1"/>
        <end position="40"/>
    </location>
</feature>
<feature type="compositionally biased region" description="Polar residues" evidence="3">
    <location>
        <begin position="8"/>
        <end position="25"/>
    </location>
</feature>
<organism>
    <name type="scientific">Xenopus tropicalis</name>
    <name type="common">Western clawed frog</name>
    <name type="synonym">Silurana tropicalis</name>
    <dbReference type="NCBI Taxonomy" id="8364"/>
    <lineage>
        <taxon>Eukaryota</taxon>
        <taxon>Metazoa</taxon>
        <taxon>Chordata</taxon>
        <taxon>Craniata</taxon>
        <taxon>Vertebrata</taxon>
        <taxon>Euteleostomi</taxon>
        <taxon>Amphibia</taxon>
        <taxon>Batrachia</taxon>
        <taxon>Anura</taxon>
        <taxon>Pipoidea</taxon>
        <taxon>Pipidae</taxon>
        <taxon>Xenopodinae</taxon>
        <taxon>Xenopus</taxon>
        <taxon>Silurana</taxon>
    </lineage>
</organism>
<dbReference type="EMBL" id="BC135262">
    <property type="protein sequence ID" value="AAI35263.1"/>
    <property type="molecule type" value="mRNA"/>
</dbReference>
<dbReference type="RefSeq" id="NP_001090814.1">
    <property type="nucleotide sequence ID" value="NM_001097345.1"/>
</dbReference>
<dbReference type="FunCoup" id="A4IGV6">
    <property type="interactions" value="344"/>
</dbReference>
<dbReference type="STRING" id="8364.ENSXETP00000041267"/>
<dbReference type="PaxDb" id="8364-ENSXETP00000051427"/>
<dbReference type="DNASU" id="100037912"/>
<dbReference type="GeneID" id="100037912"/>
<dbReference type="KEGG" id="xtr:100037912"/>
<dbReference type="AGR" id="Xenbase:XB-GENE-942413"/>
<dbReference type="CTD" id="90355"/>
<dbReference type="Xenbase" id="XB-GENE-942413">
    <property type="gene designation" value="macir"/>
</dbReference>
<dbReference type="eggNOG" id="ENOG502QRGS">
    <property type="taxonomic scope" value="Eukaryota"/>
</dbReference>
<dbReference type="HOGENOM" id="CLU_082309_0_0_1"/>
<dbReference type="InParanoid" id="A4IGV6"/>
<dbReference type="OMA" id="LAHKCTG"/>
<dbReference type="OrthoDB" id="9859373at2759"/>
<dbReference type="PhylomeDB" id="A4IGV6"/>
<dbReference type="TreeFam" id="TF331553"/>
<dbReference type="Proteomes" id="UP000008143">
    <property type="component" value="Chromosome 1"/>
</dbReference>
<dbReference type="Bgee" id="ENSXETG00000023861">
    <property type="expression patterns" value="Expressed in brain and 13 other cell types or tissues"/>
</dbReference>
<dbReference type="GO" id="GO:0035869">
    <property type="term" value="C:ciliary transition zone"/>
    <property type="evidence" value="ECO:0000250"/>
    <property type="project" value="UniProtKB"/>
</dbReference>
<dbReference type="GO" id="GO:0005737">
    <property type="term" value="C:cytoplasm"/>
    <property type="evidence" value="ECO:0000250"/>
    <property type="project" value="UniProtKB"/>
</dbReference>
<dbReference type="GO" id="GO:0060271">
    <property type="term" value="P:cilium assembly"/>
    <property type="evidence" value="ECO:0000250"/>
    <property type="project" value="UniProtKB"/>
</dbReference>
<dbReference type="GO" id="GO:0006954">
    <property type="term" value="P:inflammatory response"/>
    <property type="evidence" value="ECO:0007669"/>
    <property type="project" value="UniProtKB-KW"/>
</dbReference>
<dbReference type="GO" id="GO:0050728">
    <property type="term" value="P:negative regulation of inflammatory response"/>
    <property type="evidence" value="ECO:0000250"/>
    <property type="project" value="UniProtKB"/>
</dbReference>
<dbReference type="GO" id="GO:0015031">
    <property type="term" value="P:protein transport"/>
    <property type="evidence" value="ECO:0007669"/>
    <property type="project" value="UniProtKB-KW"/>
</dbReference>
<dbReference type="InterPro" id="IPR029219">
    <property type="entry name" value="UNC119-bd"/>
</dbReference>
<dbReference type="PANTHER" id="PTHR31224:SF2">
    <property type="entry name" value="MACROPHAGE IMMUNOMETABOLISM REGULATOR"/>
    <property type="match status" value="1"/>
</dbReference>
<dbReference type="PANTHER" id="PTHR31224">
    <property type="entry name" value="UNC119-BINDING PROTEIN C5ORF30"/>
    <property type="match status" value="1"/>
</dbReference>
<dbReference type="Pfam" id="PF15435">
    <property type="entry name" value="UNC119_bdg"/>
    <property type="match status" value="1"/>
</dbReference>
<comment type="function">
    <text evidence="1 2">May play a role in immune regulation through regulation of the macrophage function (By similarity). May also play a role in trafficking of proteins via its interaction with unc119 family cargo adapters (By similarity). May play a role in ciliary membrane localization (By similarity).</text>
</comment>
<comment type="subunit">
    <text evidence="2">Interacts with unc119 family proteins; interaction preferentially takes place when unc119 proteins are unliganded with myristoylated proteins.</text>
</comment>
<comment type="subcellular location">
    <subcellularLocation>
        <location evidence="2">Cytoplasm</location>
    </subcellularLocation>
    <subcellularLocation>
        <location evidence="2">Cell projection</location>
        <location evidence="2">Cilium</location>
    </subcellularLocation>
</comment>
<comment type="similarity">
    <text evidence="4">Belongs to the UNC119-binding protein family.</text>
</comment>
<proteinExistence type="evidence at transcript level"/>
<name>MACIR_XENTR</name>
<protein>
    <recommendedName>
        <fullName>Macrophage immunometabolism regulator</fullName>
    </recommendedName>
</protein>
<sequence length="205" mass="22962">MEVDINGVNRTNNSVPSTTEGSSPSKPDPEKPRCSSTPCSPIRRTVSGYQILHMDANFLVGFTTGEELLKLAHKCATTEENPGESLPAFRSKQLESGLSRSSRIYKARGRQYQPYEIPAVNGRRRRRMPSSGDKCNKAVPYEPYKAVHGPLPLCLLKGKRAHSKSLDYLNLDKMNIKESADTEVLQYQLQHLTLRGDRVFARNNT</sequence>
<reference key="1">
    <citation type="submission" date="2007-03" db="EMBL/GenBank/DDBJ databases">
        <authorList>
            <consortium name="NIH - Xenopus Gene Collection (XGC) project"/>
        </authorList>
    </citation>
    <scope>NUCLEOTIDE SEQUENCE [LARGE SCALE MRNA]</scope>
    <source>
        <tissue>Tadpole</tissue>
    </source>
</reference>
<evidence type="ECO:0000250" key="1">
    <source>
        <dbReference type="UniProtKB" id="B3DHS1"/>
    </source>
</evidence>
<evidence type="ECO:0000250" key="2">
    <source>
        <dbReference type="UniProtKB" id="Q96GV9"/>
    </source>
</evidence>
<evidence type="ECO:0000256" key="3">
    <source>
        <dbReference type="SAM" id="MobiDB-lite"/>
    </source>
</evidence>
<evidence type="ECO:0000305" key="4"/>
<keyword id="KW-0966">Cell projection</keyword>
<keyword id="KW-0969">Cilium</keyword>
<keyword id="KW-0970">Cilium biogenesis/degradation</keyword>
<keyword id="KW-0963">Cytoplasm</keyword>
<keyword id="KW-0395">Inflammatory response</keyword>
<keyword id="KW-0653">Protein transport</keyword>
<keyword id="KW-1185">Reference proteome</keyword>
<keyword id="KW-0813">Transport</keyword>
<gene>
    <name type="primary">macir</name>
</gene>